<gene>
    <name type="primary">motC</name>
    <name type="ordered locus">R00675</name>
    <name type="ORF">SMc03043</name>
</gene>
<feature type="signal peptide" evidence="1">
    <location>
        <begin position="1"/>
        <end position="15"/>
    </location>
</feature>
<feature type="chain" id="PRO_0000021731" description="Chemotaxis protein MotC">
    <location>
        <begin position="16"/>
        <end position="434"/>
    </location>
</feature>
<feature type="region of interest" description="Disordered" evidence="2">
    <location>
        <begin position="344"/>
        <end position="417"/>
    </location>
</feature>
<feature type="sequence conflict" description="In Ref. 1; AAB81409." evidence="3" ref="1">
    <original>I</original>
    <variation>L</variation>
    <location>
        <position position="8"/>
    </location>
</feature>
<feature type="sequence conflict" description="In Ref. 1; AAB81409." evidence="3" ref="1">
    <original>I</original>
    <variation>L</variation>
    <location>
        <position position="22"/>
    </location>
</feature>
<feature type="sequence conflict" description="In Ref. 1; AAB81409." evidence="3" ref="1">
    <original>H</original>
    <variation>P</variation>
    <location>
        <position position="74"/>
    </location>
</feature>
<feature type="sequence conflict" description="In Ref. 1; AAB81409." evidence="3" ref="1">
    <original>Q</original>
    <variation>G</variation>
    <location>
        <position position="196"/>
    </location>
</feature>
<feature type="sequence conflict" description="In Ref. 1; AAB81409." evidence="3" ref="1">
    <original>F</original>
    <variation>Y</variation>
    <location>
        <position position="219"/>
    </location>
</feature>
<feature type="sequence conflict" description="In Ref. 1; AAB81409." evidence="3" ref="1">
    <original>L</original>
    <variation>F</variation>
    <location>
        <position position="349"/>
    </location>
</feature>
<feature type="sequence conflict" description="In Ref. 1; AAB81409." evidence="3" ref="1">
    <original>V</original>
    <variation>A</variation>
    <location>
        <position position="403"/>
    </location>
</feature>
<feature type="sequence conflict" description="In Ref. 1; AAB81409." evidence="3" ref="1">
    <original>G</original>
    <variation>R</variation>
    <location>
        <position position="431"/>
    </location>
</feature>
<sequence length="434" mass="46532">MLKRLCTILAASALAAPLALGIARANGTEELTPYKMIRSLQYVQDSVVLGDHSAIEMQRFMLGAIDERLRAADHSAFRDPRNVDAALVYVMSGGNPATLDLLADRDIEGNFDSRVTDALRQYLNGKGPLIVENLTKAAPEYKNSRIGPYLFLILGNAMSQQDPIEAMKHYDWARLTAPGTIIEEAALRRSVSLAAQAGLPEKGFRYALNYARRYLTSPFASQFADVFVELAVAHFDEAADGRVSEILSFMDSARQREVYLRVARRAAIAGNQALARLASRRAEELAGDDSSRSQVLASFYEGLAAVPSADVFSAAEALEAIPDEKLSPRDRALREAAKAVADAVVRPPLGESPAQAPAPIAERPAGEQSELAAEESGSGMSPFGQPVEASPGRPSEMTAEADVAASDDPALDGFLASGRSKIDEIDALLKGEGQ</sequence>
<comment type="function">
    <text>Required for the rotation of the flagellar motor. Might control the energy flux or coupling that drives flagellar rotation.</text>
</comment>
<comment type="subcellular location">
    <subcellularLocation>
        <location>Periplasm</location>
    </subcellularLocation>
</comment>
<accession>Q52963</accession>
<reference key="1">
    <citation type="journal article" date="1997" name="J. Bacteriol.">
        <title>Three genes of a motility operon and their role in flagellar rotary speed variation in Rhizobium meliloti.</title>
        <authorList>
            <person name="Platzer J."/>
            <person name="Sterr W."/>
            <person name="Hausmann M."/>
            <person name="Schmitt R."/>
        </authorList>
    </citation>
    <scope>NUCLEOTIDE SEQUENCE [GENOMIC DNA]</scope>
    <source>
        <strain>RU11/001</strain>
    </source>
</reference>
<reference key="2">
    <citation type="journal article" date="2001" name="Proc. Natl. Acad. Sci. U.S.A.">
        <title>Analysis of the chromosome sequence of the legume symbiont Sinorhizobium meliloti strain 1021.</title>
        <authorList>
            <person name="Capela D."/>
            <person name="Barloy-Hubler F."/>
            <person name="Gouzy J."/>
            <person name="Bothe G."/>
            <person name="Ampe F."/>
            <person name="Batut J."/>
            <person name="Boistard P."/>
            <person name="Becker A."/>
            <person name="Boutry M."/>
            <person name="Cadieu E."/>
            <person name="Dreano S."/>
            <person name="Gloux S."/>
            <person name="Godrie T."/>
            <person name="Goffeau A."/>
            <person name="Kahn D."/>
            <person name="Kiss E."/>
            <person name="Lelaure V."/>
            <person name="Masuy D."/>
            <person name="Pohl T."/>
            <person name="Portetelle D."/>
            <person name="Puehler A."/>
            <person name="Purnelle B."/>
            <person name="Ramsperger U."/>
            <person name="Renard C."/>
            <person name="Thebault P."/>
            <person name="Vandenbol M."/>
            <person name="Weidner S."/>
            <person name="Galibert F."/>
        </authorList>
    </citation>
    <scope>NUCLEOTIDE SEQUENCE [LARGE SCALE GENOMIC DNA]</scope>
    <source>
        <strain>1021</strain>
    </source>
</reference>
<reference key="3">
    <citation type="journal article" date="2001" name="Science">
        <title>The composite genome of the legume symbiont Sinorhizobium meliloti.</title>
        <authorList>
            <person name="Galibert F."/>
            <person name="Finan T.M."/>
            <person name="Long S.R."/>
            <person name="Puehler A."/>
            <person name="Abola P."/>
            <person name="Ampe F."/>
            <person name="Barloy-Hubler F."/>
            <person name="Barnett M.J."/>
            <person name="Becker A."/>
            <person name="Boistard P."/>
            <person name="Bothe G."/>
            <person name="Boutry M."/>
            <person name="Bowser L."/>
            <person name="Buhrmester J."/>
            <person name="Cadieu E."/>
            <person name="Capela D."/>
            <person name="Chain P."/>
            <person name="Cowie A."/>
            <person name="Davis R.W."/>
            <person name="Dreano S."/>
            <person name="Federspiel N.A."/>
            <person name="Fisher R.F."/>
            <person name="Gloux S."/>
            <person name="Godrie T."/>
            <person name="Goffeau A."/>
            <person name="Golding B."/>
            <person name="Gouzy J."/>
            <person name="Gurjal M."/>
            <person name="Hernandez-Lucas I."/>
            <person name="Hong A."/>
            <person name="Huizar L."/>
            <person name="Hyman R.W."/>
            <person name="Jones T."/>
            <person name="Kahn D."/>
            <person name="Kahn M.L."/>
            <person name="Kalman S."/>
            <person name="Keating D.H."/>
            <person name="Kiss E."/>
            <person name="Komp C."/>
            <person name="Lelaure V."/>
            <person name="Masuy D."/>
            <person name="Palm C."/>
            <person name="Peck M.C."/>
            <person name="Pohl T.M."/>
            <person name="Portetelle D."/>
            <person name="Purnelle B."/>
            <person name="Ramsperger U."/>
            <person name="Surzycki R."/>
            <person name="Thebault P."/>
            <person name="Vandenbol M."/>
            <person name="Vorhoelter F.J."/>
            <person name="Weidner S."/>
            <person name="Wells D.H."/>
            <person name="Wong K."/>
            <person name="Yeh K.-C."/>
            <person name="Batut J."/>
        </authorList>
    </citation>
    <scope>NUCLEOTIDE SEQUENCE [LARGE SCALE GENOMIC DNA]</scope>
    <source>
        <strain>1021</strain>
    </source>
</reference>
<keyword id="KW-0145">Chemotaxis</keyword>
<keyword id="KW-0283">Flagellar rotation</keyword>
<keyword id="KW-0574">Periplasm</keyword>
<keyword id="KW-1185">Reference proteome</keyword>
<keyword id="KW-0732">Signal</keyword>
<proteinExistence type="inferred from homology"/>
<evidence type="ECO:0000255" key="1"/>
<evidence type="ECO:0000256" key="2">
    <source>
        <dbReference type="SAM" id="MobiDB-lite"/>
    </source>
</evidence>
<evidence type="ECO:0000305" key="3"/>
<dbReference type="EMBL" id="L49337">
    <property type="protein sequence ID" value="AAB81409.1"/>
    <property type="molecule type" value="Genomic_DNA"/>
</dbReference>
<dbReference type="EMBL" id="AL591688">
    <property type="protein sequence ID" value="CAC45247.1"/>
    <property type="molecule type" value="Genomic_DNA"/>
</dbReference>
<dbReference type="RefSeq" id="NP_384781.1">
    <property type="nucleotide sequence ID" value="NC_003047.1"/>
</dbReference>
<dbReference type="RefSeq" id="WP_010968742.1">
    <property type="nucleotide sequence ID" value="NC_003047.1"/>
</dbReference>
<dbReference type="EnsemblBacteria" id="CAC45247">
    <property type="protein sequence ID" value="CAC45247"/>
    <property type="gene ID" value="SMc03043"/>
</dbReference>
<dbReference type="KEGG" id="sme:SMc03043"/>
<dbReference type="PATRIC" id="fig|266834.11.peg.2049"/>
<dbReference type="eggNOG" id="ENOG502ZART">
    <property type="taxonomic scope" value="Bacteria"/>
</dbReference>
<dbReference type="HOGENOM" id="CLU_035030_1_0_5"/>
<dbReference type="OrthoDB" id="9812933at2"/>
<dbReference type="Proteomes" id="UP000001976">
    <property type="component" value="Chromosome"/>
</dbReference>
<dbReference type="GO" id="GO:0042597">
    <property type="term" value="C:periplasmic space"/>
    <property type="evidence" value="ECO:0007669"/>
    <property type="project" value="UniProtKB-SubCell"/>
</dbReference>
<dbReference type="GO" id="GO:0097588">
    <property type="term" value="P:archaeal or bacterial-type flagellum-dependent cell motility"/>
    <property type="evidence" value="ECO:0007669"/>
    <property type="project" value="UniProtKB-KW"/>
</dbReference>
<dbReference type="GO" id="GO:0006935">
    <property type="term" value="P:chemotaxis"/>
    <property type="evidence" value="ECO:0007669"/>
    <property type="project" value="UniProtKB-KW"/>
</dbReference>
<dbReference type="NCBIfam" id="NF009442">
    <property type="entry name" value="PRK12798.1-4"/>
    <property type="match status" value="1"/>
</dbReference>
<organism>
    <name type="scientific">Rhizobium meliloti (strain 1021)</name>
    <name type="common">Ensifer meliloti</name>
    <name type="synonym">Sinorhizobium meliloti</name>
    <dbReference type="NCBI Taxonomy" id="266834"/>
    <lineage>
        <taxon>Bacteria</taxon>
        <taxon>Pseudomonadati</taxon>
        <taxon>Pseudomonadota</taxon>
        <taxon>Alphaproteobacteria</taxon>
        <taxon>Hyphomicrobiales</taxon>
        <taxon>Rhizobiaceae</taxon>
        <taxon>Sinorhizobium/Ensifer group</taxon>
        <taxon>Sinorhizobium</taxon>
    </lineage>
</organism>
<name>MOTC_RHIME</name>
<protein>
    <recommendedName>
        <fullName>Chemotaxis protein MotC</fullName>
    </recommendedName>
    <alternativeName>
        <fullName>Motility protein C</fullName>
    </alternativeName>
</protein>